<protein>
    <recommendedName>
        <fullName>Microsomal triglyceride transfer protein large subunit</fullName>
    </recommendedName>
</protein>
<proteinExistence type="evidence at protein level"/>
<dbReference type="EMBL" id="L47970">
    <property type="protein sequence ID" value="AAB51431.1"/>
    <property type="molecule type" value="mRNA"/>
</dbReference>
<dbReference type="EMBL" id="EU553486">
    <property type="protein sequence ID" value="ACB41497.1"/>
    <property type="molecule type" value="mRNA"/>
</dbReference>
<dbReference type="EMBL" id="AK146553">
    <property type="protein sequence ID" value="BAE27255.1"/>
    <property type="molecule type" value="mRNA"/>
</dbReference>
<dbReference type="EMBL" id="CH466532">
    <property type="protein sequence ID" value="EDL12110.1"/>
    <property type="molecule type" value="Genomic_DNA"/>
</dbReference>
<dbReference type="EMBL" id="BC012686">
    <property type="protein sequence ID" value="AAH12686.1"/>
    <property type="molecule type" value="mRNA"/>
</dbReference>
<dbReference type="CCDS" id="CCDS38650.1">
    <molecule id="O08601-1"/>
</dbReference>
<dbReference type="CCDS" id="CCDS51080.1">
    <molecule id="O08601-2"/>
</dbReference>
<dbReference type="RefSeq" id="NP_001156929.1">
    <molecule id="O08601-2"/>
    <property type="nucleotide sequence ID" value="NM_001163457.2"/>
</dbReference>
<dbReference type="RefSeq" id="NP_001341980.1">
    <molecule id="O08601-1"/>
    <property type="nucleotide sequence ID" value="NM_001355051.1"/>
</dbReference>
<dbReference type="RefSeq" id="NP_001341981.1">
    <molecule id="O08601-1"/>
    <property type="nucleotide sequence ID" value="NM_001355052.1"/>
</dbReference>
<dbReference type="RefSeq" id="NP_032668.2">
    <molecule id="O08601-1"/>
    <property type="nucleotide sequence ID" value="NM_008642.3"/>
</dbReference>
<dbReference type="RefSeq" id="XP_006501165.1">
    <molecule id="O08601-2"/>
    <property type="nucleotide sequence ID" value="XM_006501102.4"/>
</dbReference>
<dbReference type="RefSeq" id="XP_006501166.1">
    <molecule id="O08601-1"/>
    <property type="nucleotide sequence ID" value="XM_006501103.4"/>
</dbReference>
<dbReference type="RefSeq" id="XP_017174963.1">
    <property type="nucleotide sequence ID" value="XM_017319474.1"/>
</dbReference>
<dbReference type="RefSeq" id="XP_017174964.1">
    <property type="nucleotide sequence ID" value="XM_017319475.1"/>
</dbReference>
<dbReference type="SMR" id="O08601"/>
<dbReference type="BioGRID" id="201601">
    <property type="interactions" value="7"/>
</dbReference>
<dbReference type="FunCoup" id="O08601">
    <property type="interactions" value="326"/>
</dbReference>
<dbReference type="IntAct" id="O08601">
    <property type="interactions" value="5"/>
</dbReference>
<dbReference type="MINT" id="O08601"/>
<dbReference type="STRING" id="10090.ENSMUSP00000096179"/>
<dbReference type="CarbonylDB" id="O08601"/>
<dbReference type="GlyGen" id="O08601">
    <property type="glycosylation" value="1 site, 1 O-linked glycan (1 site)"/>
</dbReference>
<dbReference type="iPTMnet" id="O08601"/>
<dbReference type="PhosphoSitePlus" id="O08601"/>
<dbReference type="SwissPalm" id="O08601"/>
<dbReference type="jPOST" id="O08601"/>
<dbReference type="PaxDb" id="10090-ENSMUSP00000096179"/>
<dbReference type="PeptideAtlas" id="O08601"/>
<dbReference type="ProteomicsDB" id="287517">
    <molecule id="O08601-1"/>
</dbReference>
<dbReference type="ProteomicsDB" id="287518">
    <molecule id="O08601-2"/>
</dbReference>
<dbReference type="Pumba" id="O08601"/>
<dbReference type="Antibodypedia" id="25923">
    <property type="antibodies" value="239 antibodies from 30 providers"/>
</dbReference>
<dbReference type="DNASU" id="17777"/>
<dbReference type="Ensembl" id="ENSMUST00000029805.13">
    <molecule id="O08601-1"/>
    <property type="protein sequence ID" value="ENSMUSP00000029805.9"/>
    <property type="gene ID" value="ENSMUSG00000028158.15"/>
</dbReference>
<dbReference type="Ensembl" id="ENSMUST00000098580.6">
    <molecule id="O08601-2"/>
    <property type="protein sequence ID" value="ENSMUSP00000096179.3"/>
    <property type="gene ID" value="ENSMUSG00000028158.15"/>
</dbReference>
<dbReference type="GeneID" id="17777"/>
<dbReference type="KEGG" id="mmu:17777"/>
<dbReference type="UCSC" id="uc008rmw.2">
    <molecule id="O08601-1"/>
    <property type="organism name" value="mouse"/>
</dbReference>
<dbReference type="UCSC" id="uc008rmx.2">
    <molecule id="O08601-2"/>
    <property type="organism name" value="mouse"/>
</dbReference>
<dbReference type="AGR" id="MGI:106926"/>
<dbReference type="CTD" id="4547"/>
<dbReference type="MGI" id="MGI:106926">
    <property type="gene designation" value="Mttp"/>
</dbReference>
<dbReference type="VEuPathDB" id="HostDB:ENSMUSG00000028158"/>
<dbReference type="eggNOG" id="KOG4337">
    <property type="taxonomic scope" value="Eukaryota"/>
</dbReference>
<dbReference type="GeneTree" id="ENSGT00390000011412"/>
<dbReference type="HOGENOM" id="CLU_014703_0_0_1"/>
<dbReference type="InParanoid" id="O08601"/>
<dbReference type="OMA" id="HVWGGSA"/>
<dbReference type="OrthoDB" id="32404at9989"/>
<dbReference type="PhylomeDB" id="O08601"/>
<dbReference type="TreeFam" id="TF328754"/>
<dbReference type="Reactome" id="R-MMU-8866423">
    <property type="pathway name" value="VLDL assembly"/>
</dbReference>
<dbReference type="Reactome" id="R-MMU-8963888">
    <property type="pathway name" value="Chylomicron assembly"/>
</dbReference>
<dbReference type="Reactome" id="R-MMU-8964041">
    <property type="pathway name" value="LDL remodeling"/>
</dbReference>
<dbReference type="BioGRID-ORCS" id="17777">
    <property type="hits" value="3 hits in 79 CRISPR screens"/>
</dbReference>
<dbReference type="PRO" id="PR:O08601"/>
<dbReference type="Proteomes" id="UP000000589">
    <property type="component" value="Chromosome 3"/>
</dbReference>
<dbReference type="RNAct" id="O08601">
    <property type="molecule type" value="protein"/>
</dbReference>
<dbReference type="Bgee" id="ENSMUSG00000028158">
    <property type="expression patterns" value="Expressed in small intestine Peyer's patch and 212 other cell types or tissues"/>
</dbReference>
<dbReference type="GO" id="GO:0016323">
    <property type="term" value="C:basolateral plasma membrane"/>
    <property type="evidence" value="ECO:0007669"/>
    <property type="project" value="Ensembl"/>
</dbReference>
<dbReference type="GO" id="GO:0031526">
    <property type="term" value="C:brush border membrane"/>
    <property type="evidence" value="ECO:0007669"/>
    <property type="project" value="Ensembl"/>
</dbReference>
<dbReference type="GO" id="GO:0005829">
    <property type="term" value="C:cytosol"/>
    <property type="evidence" value="ECO:0007669"/>
    <property type="project" value="Ensembl"/>
</dbReference>
<dbReference type="GO" id="GO:0005783">
    <property type="term" value="C:endoplasmic reticulum"/>
    <property type="evidence" value="ECO:0000314"/>
    <property type="project" value="MGI"/>
</dbReference>
<dbReference type="GO" id="GO:0005794">
    <property type="term" value="C:Golgi apparatus"/>
    <property type="evidence" value="ECO:0000314"/>
    <property type="project" value="MGI"/>
</dbReference>
<dbReference type="GO" id="GO:0031528">
    <property type="term" value="C:microvillus membrane"/>
    <property type="evidence" value="ECO:0007669"/>
    <property type="project" value="Ensembl"/>
</dbReference>
<dbReference type="GO" id="GO:0043235">
    <property type="term" value="C:receptor complex"/>
    <property type="evidence" value="ECO:0000266"/>
    <property type="project" value="MGI"/>
</dbReference>
<dbReference type="GO" id="GO:0031982">
    <property type="term" value="C:vesicle"/>
    <property type="evidence" value="ECO:0007669"/>
    <property type="project" value="Ensembl"/>
</dbReference>
<dbReference type="GO" id="GO:0034185">
    <property type="term" value="F:apolipoprotein binding"/>
    <property type="evidence" value="ECO:0007669"/>
    <property type="project" value="Ensembl"/>
</dbReference>
<dbReference type="GO" id="GO:1902388">
    <property type="term" value="F:ceramide 1-phosphate transfer activity"/>
    <property type="evidence" value="ECO:0000250"/>
    <property type="project" value="UniProtKB"/>
</dbReference>
<dbReference type="GO" id="GO:0120020">
    <property type="term" value="F:cholesterol transfer activity"/>
    <property type="evidence" value="ECO:0000314"/>
    <property type="project" value="UniProtKB"/>
</dbReference>
<dbReference type="GO" id="GO:0008289">
    <property type="term" value="F:lipid binding"/>
    <property type="evidence" value="ECO:0007669"/>
    <property type="project" value="UniProtKB-KW"/>
</dbReference>
<dbReference type="GO" id="GO:0005319">
    <property type="term" value="F:lipid transporter activity"/>
    <property type="evidence" value="ECO:0000314"/>
    <property type="project" value="MGI"/>
</dbReference>
<dbReference type="GO" id="GO:0120019">
    <property type="term" value="F:phosphatidylcholine transfer activity"/>
    <property type="evidence" value="ECO:0007669"/>
    <property type="project" value="Ensembl"/>
</dbReference>
<dbReference type="GO" id="GO:1904121">
    <property type="term" value="F:phosphatidylethanolamine transfer activity"/>
    <property type="evidence" value="ECO:0000314"/>
    <property type="project" value="UniProtKB"/>
</dbReference>
<dbReference type="GO" id="GO:0120014">
    <property type="term" value="F:phospholipid transfer activity"/>
    <property type="evidence" value="ECO:0000314"/>
    <property type="project" value="UniProtKB"/>
</dbReference>
<dbReference type="GO" id="GO:0046982">
    <property type="term" value="F:protein heterodimerization activity"/>
    <property type="evidence" value="ECO:0000250"/>
    <property type="project" value="UniProtKB"/>
</dbReference>
<dbReference type="GO" id="GO:0044877">
    <property type="term" value="F:protein-containing complex binding"/>
    <property type="evidence" value="ECO:0007669"/>
    <property type="project" value="Ensembl"/>
</dbReference>
<dbReference type="GO" id="GO:0140344">
    <property type="term" value="F:triglyceride transfer activity"/>
    <property type="evidence" value="ECO:0000314"/>
    <property type="project" value="UniProtKB"/>
</dbReference>
<dbReference type="GO" id="GO:0042632">
    <property type="term" value="P:cholesterol homeostasis"/>
    <property type="evidence" value="ECO:0000315"/>
    <property type="project" value="MGI"/>
</dbReference>
<dbReference type="GO" id="GO:0008203">
    <property type="term" value="P:cholesterol metabolic process"/>
    <property type="evidence" value="ECO:0007669"/>
    <property type="project" value="UniProtKB-KW"/>
</dbReference>
<dbReference type="GO" id="GO:0007623">
    <property type="term" value="P:circadian rhythm"/>
    <property type="evidence" value="ECO:0000270"/>
    <property type="project" value="UniProtKB"/>
</dbReference>
<dbReference type="GO" id="GO:0051649">
    <property type="term" value="P:establishment of localization in cell"/>
    <property type="evidence" value="ECO:0000315"/>
    <property type="project" value="MGI"/>
</dbReference>
<dbReference type="GO" id="GO:0006629">
    <property type="term" value="P:lipid metabolic process"/>
    <property type="evidence" value="ECO:0000314"/>
    <property type="project" value="MGI"/>
</dbReference>
<dbReference type="GO" id="GO:0042157">
    <property type="term" value="P:lipoprotein metabolic process"/>
    <property type="evidence" value="ECO:0000315"/>
    <property type="project" value="MGI"/>
</dbReference>
<dbReference type="GO" id="GO:0042953">
    <property type="term" value="P:lipoprotein transport"/>
    <property type="evidence" value="ECO:0000314"/>
    <property type="project" value="MGI"/>
</dbReference>
<dbReference type="GO" id="GO:0034374">
    <property type="term" value="P:low-density lipoprotein particle remodeling"/>
    <property type="evidence" value="ECO:0000314"/>
    <property type="project" value="MGI"/>
</dbReference>
<dbReference type="GO" id="GO:0015914">
    <property type="term" value="P:phospholipid transport"/>
    <property type="evidence" value="ECO:0000250"/>
    <property type="project" value="UniProtKB"/>
</dbReference>
<dbReference type="GO" id="GO:0034377">
    <property type="term" value="P:plasma lipoprotein particle assembly"/>
    <property type="evidence" value="ECO:0000250"/>
    <property type="project" value="UniProtKB"/>
</dbReference>
<dbReference type="GO" id="GO:0009306">
    <property type="term" value="P:protein secretion"/>
    <property type="evidence" value="ECO:0000250"/>
    <property type="project" value="UniProtKB"/>
</dbReference>
<dbReference type="GO" id="GO:0051592">
    <property type="term" value="P:response to calcium ion"/>
    <property type="evidence" value="ECO:0007669"/>
    <property type="project" value="Ensembl"/>
</dbReference>
<dbReference type="GO" id="GO:0006641">
    <property type="term" value="P:triglyceride metabolic process"/>
    <property type="evidence" value="ECO:0000314"/>
    <property type="project" value="MGI"/>
</dbReference>
<dbReference type="GO" id="GO:0034197">
    <property type="term" value="P:triglyceride transport"/>
    <property type="evidence" value="ECO:0000250"/>
    <property type="project" value="UniProtKB"/>
</dbReference>
<dbReference type="FunFam" id="2.30.230.10:FF:000001">
    <property type="entry name" value="Microsomal triglyceride transfer protein large subunit"/>
    <property type="match status" value="1"/>
</dbReference>
<dbReference type="FunFam" id="1.25.10.20:FF:000001">
    <property type="entry name" value="microsomal triglyceride transfer protein large subunit"/>
    <property type="match status" value="1"/>
</dbReference>
<dbReference type="Gene3D" id="2.30.230.10">
    <property type="entry name" value="Lipovitellin, beta-sheet shell regions, chain A"/>
    <property type="match status" value="1"/>
</dbReference>
<dbReference type="Gene3D" id="1.25.10.20">
    <property type="entry name" value="Vitellinogen, superhelical"/>
    <property type="match status" value="1"/>
</dbReference>
<dbReference type="InterPro" id="IPR015819">
    <property type="entry name" value="Lipid_transp_b-sht_shell"/>
</dbReference>
<dbReference type="InterPro" id="IPR011030">
    <property type="entry name" value="Lipovitellin_superhlx_dom"/>
</dbReference>
<dbReference type="InterPro" id="IPR045811">
    <property type="entry name" value="MTP_lip-bd"/>
</dbReference>
<dbReference type="InterPro" id="IPR039988">
    <property type="entry name" value="MTTP"/>
</dbReference>
<dbReference type="InterPro" id="IPR015816">
    <property type="entry name" value="Vitellinogen_b-sht_N"/>
</dbReference>
<dbReference type="InterPro" id="IPR001747">
    <property type="entry name" value="Vitellogenin_N"/>
</dbReference>
<dbReference type="PANTHER" id="PTHR13024:SF1">
    <property type="entry name" value="MICROSOMAL TRIGLYCERIDE TRANSFER PROTEIN LARGE SUBUNIT"/>
    <property type="match status" value="1"/>
</dbReference>
<dbReference type="PANTHER" id="PTHR13024">
    <property type="entry name" value="MICROSOMAL TRIGLYCERIDE TRANSFER PROTEIN, LARGE SUBUNIT"/>
    <property type="match status" value="1"/>
</dbReference>
<dbReference type="Pfam" id="PF19444">
    <property type="entry name" value="MTP_lip_bd"/>
    <property type="match status" value="1"/>
</dbReference>
<dbReference type="Pfam" id="PF01347">
    <property type="entry name" value="Vitellogenin_N"/>
    <property type="match status" value="1"/>
</dbReference>
<dbReference type="SMART" id="SM00638">
    <property type="entry name" value="LPD_N"/>
    <property type="match status" value="1"/>
</dbReference>
<dbReference type="SUPFAM" id="SSF56968">
    <property type="entry name" value="Lipovitellin-phosvitin complex, beta-sheet shell regions"/>
    <property type="match status" value="1"/>
</dbReference>
<dbReference type="SUPFAM" id="SSF48431">
    <property type="entry name" value="Lipovitellin-phosvitin complex, superhelical domain"/>
    <property type="match status" value="1"/>
</dbReference>
<dbReference type="PROSITE" id="PS51211">
    <property type="entry name" value="VITELLOGENIN"/>
    <property type="match status" value="1"/>
</dbReference>
<sequence length="894" mass="99099">MILLAVLFLCFFSSYSASVKGHTTGLSLNNERLYKLTYSTEVFLDGGKGKPQDSVGYKISSDVDVVLLWRNPDGDDDQVIQVTITAVNVENAGQQRGEKSIFQGKSTPKIIGKDNLEALQRPMLLHLVRGKVKEFYSYENEPVGIENLKRGLASLFQMQLSSGTTNEVDISGDCKVTYQAQQDKVVKIKALDTCKIERSGFTTANQVLGVSSKATSVTTYKIEDSFVTAVLAEETRAFALNFQQTIAGKIVSKQKLELKTTEAGPRMIPGKQVAGVIKAVDSKYKAIPIVGQVLERVCKGCPSLAEHWKSIRKNLEPENLSKAEAVQSFLAFIQHLRTSRREEILQILKAEKKEVLPQLVDAVTSAQTPDSLEAILDFLDFKSDSSIILQERFLYACGFATHPDEELLRALLSKFKGSFASNDIRESVMIIIGALVRKLCQNEGCKLKAVVEAKKLILGGLEKPEKKEDTTMYLLALKNALLPEGIPLLLKYAEAGEGPVSHLATTVLQRYDVSFITDEVKKTLNRIYHQNRKVHEKTVRTTAAAVILKNPSYMDVKNILLSIGELPKEMNKYMLTVVQDILHFEMPASKMIRRVLKEMAVHNYDRFSKSGSSSAYTGYVERSPRAASTYSLDILYSGSGILRRSNLNIFQYIGKAELHGSQVVIEAQGLEGLIAATPDEGEENLDSYAGMSAILFDVQLRPVTFFNGYSDLMSKMLSASGDPVSVVKGLILLIDHSQDIQLQSGLKANMEIQGGLAIDISGSMEFSLWYRESKTRVKNRVAVVITSDVTVDASFVKAGVESRAETEAGLEFISTVQFSQYPFLVCMQMDKAEAPLRQFETKYERLSTGRGYVSRRRKESLVAGCELPLHQENSEMCNVVFPPQPESDNSGGWF</sequence>
<keyword id="KW-0877">Alternative promoter usage</keyword>
<keyword id="KW-0153">Cholesterol metabolism</keyword>
<keyword id="KW-1015">Disulfide bond</keyword>
<keyword id="KW-0256">Endoplasmic reticulum</keyword>
<keyword id="KW-0333">Golgi apparatus</keyword>
<keyword id="KW-0443">Lipid metabolism</keyword>
<keyword id="KW-0445">Lipid transport</keyword>
<keyword id="KW-0446">Lipid-binding</keyword>
<keyword id="KW-1185">Reference proteome</keyword>
<keyword id="KW-0732">Signal</keyword>
<keyword id="KW-0753">Steroid metabolism</keyword>
<keyword id="KW-1207">Sterol metabolism</keyword>
<keyword id="KW-0813">Transport</keyword>
<organism>
    <name type="scientific">Mus musculus</name>
    <name type="common">Mouse</name>
    <dbReference type="NCBI Taxonomy" id="10090"/>
    <lineage>
        <taxon>Eukaryota</taxon>
        <taxon>Metazoa</taxon>
        <taxon>Chordata</taxon>
        <taxon>Craniata</taxon>
        <taxon>Vertebrata</taxon>
        <taxon>Euteleostomi</taxon>
        <taxon>Mammalia</taxon>
        <taxon>Eutheria</taxon>
        <taxon>Euarchontoglires</taxon>
        <taxon>Glires</taxon>
        <taxon>Rodentia</taxon>
        <taxon>Myomorpha</taxon>
        <taxon>Muroidea</taxon>
        <taxon>Muridae</taxon>
        <taxon>Murinae</taxon>
        <taxon>Mus</taxon>
        <taxon>Mus</taxon>
    </lineage>
</organism>
<reference key="1">
    <citation type="journal article" date="1996" name="Genomics">
        <title>Mouse microsomal triglyceride transfer protein large subunit: cDNA cloning, tissue-specific expression and chromosomal localization.</title>
        <authorList>
            <person name="Nakamuta M."/>
            <person name="Chang B.H."/>
            <person name="Hoogeveen R."/>
            <person name="Li W.H."/>
            <person name="Chan L."/>
        </authorList>
    </citation>
    <scope>NUCLEOTIDE SEQUENCE [MRNA] (ISOFORM 1)</scope>
    <scope>TISSUE SPECIFICITY</scope>
    <source>
        <tissue>Liver</tissue>
        <tissue>Small intestine</tissue>
    </source>
</reference>
<reference key="2">
    <citation type="journal article" date="2007" name="J. Exp. Med.">
        <title>MTP regulated by an alternate promoter is essential for NKT cell development.</title>
        <authorList>
            <person name="Dougan S.K."/>
            <person name="Rava P."/>
            <person name="Hussain M.M."/>
            <person name="Blumberg R.S."/>
        </authorList>
    </citation>
    <scope>NUCLEOTIDE SEQUENCE [MRNA] (ISOFORM 2)</scope>
    <scope>ALTERNATIVE PROMOTER USAGE</scope>
    <scope>FUNCTION (ISOFORM 2)</scope>
    <scope>SUBCELLULAR LOCATION (ISOFORM 2)</scope>
    <scope>PROTEOLYTIC PROCESSING (ISOFORM 2)</scope>
    <scope>TISSUE SPECIFICITY (ISOFORM 2)</scope>
    <source>
        <strain>C57BL/6J</strain>
        <tissue>Thymus</tissue>
    </source>
</reference>
<reference key="3">
    <citation type="journal article" date="2005" name="Science">
        <title>The transcriptional landscape of the mammalian genome.</title>
        <authorList>
            <person name="Carninci P."/>
            <person name="Kasukawa T."/>
            <person name="Katayama S."/>
            <person name="Gough J."/>
            <person name="Frith M.C."/>
            <person name="Maeda N."/>
            <person name="Oyama R."/>
            <person name="Ravasi T."/>
            <person name="Lenhard B."/>
            <person name="Wells C."/>
            <person name="Kodzius R."/>
            <person name="Shimokawa K."/>
            <person name="Bajic V.B."/>
            <person name="Brenner S.E."/>
            <person name="Batalov S."/>
            <person name="Forrest A.R."/>
            <person name="Zavolan M."/>
            <person name="Davis M.J."/>
            <person name="Wilming L.G."/>
            <person name="Aidinis V."/>
            <person name="Allen J.E."/>
            <person name="Ambesi-Impiombato A."/>
            <person name="Apweiler R."/>
            <person name="Aturaliya R.N."/>
            <person name="Bailey T.L."/>
            <person name="Bansal M."/>
            <person name="Baxter L."/>
            <person name="Beisel K.W."/>
            <person name="Bersano T."/>
            <person name="Bono H."/>
            <person name="Chalk A.M."/>
            <person name="Chiu K.P."/>
            <person name="Choudhary V."/>
            <person name="Christoffels A."/>
            <person name="Clutterbuck D.R."/>
            <person name="Crowe M.L."/>
            <person name="Dalla E."/>
            <person name="Dalrymple B.P."/>
            <person name="de Bono B."/>
            <person name="Della Gatta G."/>
            <person name="di Bernardo D."/>
            <person name="Down T."/>
            <person name="Engstrom P."/>
            <person name="Fagiolini M."/>
            <person name="Faulkner G."/>
            <person name="Fletcher C.F."/>
            <person name="Fukushima T."/>
            <person name="Furuno M."/>
            <person name="Futaki S."/>
            <person name="Gariboldi M."/>
            <person name="Georgii-Hemming P."/>
            <person name="Gingeras T.R."/>
            <person name="Gojobori T."/>
            <person name="Green R.E."/>
            <person name="Gustincich S."/>
            <person name="Harbers M."/>
            <person name="Hayashi Y."/>
            <person name="Hensch T.K."/>
            <person name="Hirokawa N."/>
            <person name="Hill D."/>
            <person name="Huminiecki L."/>
            <person name="Iacono M."/>
            <person name="Ikeo K."/>
            <person name="Iwama A."/>
            <person name="Ishikawa T."/>
            <person name="Jakt M."/>
            <person name="Kanapin A."/>
            <person name="Katoh M."/>
            <person name="Kawasawa Y."/>
            <person name="Kelso J."/>
            <person name="Kitamura H."/>
            <person name="Kitano H."/>
            <person name="Kollias G."/>
            <person name="Krishnan S.P."/>
            <person name="Kruger A."/>
            <person name="Kummerfeld S.K."/>
            <person name="Kurochkin I.V."/>
            <person name="Lareau L.F."/>
            <person name="Lazarevic D."/>
            <person name="Lipovich L."/>
            <person name="Liu J."/>
            <person name="Liuni S."/>
            <person name="McWilliam S."/>
            <person name="Madan Babu M."/>
            <person name="Madera M."/>
            <person name="Marchionni L."/>
            <person name="Matsuda H."/>
            <person name="Matsuzawa S."/>
            <person name="Miki H."/>
            <person name="Mignone F."/>
            <person name="Miyake S."/>
            <person name="Morris K."/>
            <person name="Mottagui-Tabar S."/>
            <person name="Mulder N."/>
            <person name="Nakano N."/>
            <person name="Nakauchi H."/>
            <person name="Ng P."/>
            <person name="Nilsson R."/>
            <person name="Nishiguchi S."/>
            <person name="Nishikawa S."/>
            <person name="Nori F."/>
            <person name="Ohara O."/>
            <person name="Okazaki Y."/>
            <person name="Orlando V."/>
            <person name="Pang K.C."/>
            <person name="Pavan W.J."/>
            <person name="Pavesi G."/>
            <person name="Pesole G."/>
            <person name="Petrovsky N."/>
            <person name="Piazza S."/>
            <person name="Reed J."/>
            <person name="Reid J.F."/>
            <person name="Ring B.Z."/>
            <person name="Ringwald M."/>
            <person name="Rost B."/>
            <person name="Ruan Y."/>
            <person name="Salzberg S.L."/>
            <person name="Sandelin A."/>
            <person name="Schneider C."/>
            <person name="Schoenbach C."/>
            <person name="Sekiguchi K."/>
            <person name="Semple C.A."/>
            <person name="Seno S."/>
            <person name="Sessa L."/>
            <person name="Sheng Y."/>
            <person name="Shibata Y."/>
            <person name="Shimada H."/>
            <person name="Shimada K."/>
            <person name="Silva D."/>
            <person name="Sinclair B."/>
            <person name="Sperling S."/>
            <person name="Stupka E."/>
            <person name="Sugiura K."/>
            <person name="Sultana R."/>
            <person name="Takenaka Y."/>
            <person name="Taki K."/>
            <person name="Tammoja K."/>
            <person name="Tan S.L."/>
            <person name="Tang S."/>
            <person name="Taylor M.S."/>
            <person name="Tegner J."/>
            <person name="Teichmann S.A."/>
            <person name="Ueda H.R."/>
            <person name="van Nimwegen E."/>
            <person name="Verardo R."/>
            <person name="Wei C.L."/>
            <person name="Yagi K."/>
            <person name="Yamanishi H."/>
            <person name="Zabarovsky E."/>
            <person name="Zhu S."/>
            <person name="Zimmer A."/>
            <person name="Hide W."/>
            <person name="Bult C."/>
            <person name="Grimmond S.M."/>
            <person name="Teasdale R.D."/>
            <person name="Liu E.T."/>
            <person name="Brusic V."/>
            <person name="Quackenbush J."/>
            <person name="Wahlestedt C."/>
            <person name="Mattick J.S."/>
            <person name="Hume D.A."/>
            <person name="Kai C."/>
            <person name="Sasaki D."/>
            <person name="Tomaru Y."/>
            <person name="Fukuda S."/>
            <person name="Kanamori-Katayama M."/>
            <person name="Suzuki M."/>
            <person name="Aoki J."/>
            <person name="Arakawa T."/>
            <person name="Iida J."/>
            <person name="Imamura K."/>
            <person name="Itoh M."/>
            <person name="Kato T."/>
            <person name="Kawaji H."/>
            <person name="Kawagashira N."/>
            <person name="Kawashima T."/>
            <person name="Kojima M."/>
            <person name="Kondo S."/>
            <person name="Konno H."/>
            <person name="Nakano K."/>
            <person name="Ninomiya N."/>
            <person name="Nishio T."/>
            <person name="Okada M."/>
            <person name="Plessy C."/>
            <person name="Shibata K."/>
            <person name="Shiraki T."/>
            <person name="Suzuki S."/>
            <person name="Tagami M."/>
            <person name="Waki K."/>
            <person name="Watahiki A."/>
            <person name="Okamura-Oho Y."/>
            <person name="Suzuki H."/>
            <person name="Kawai J."/>
            <person name="Hayashizaki Y."/>
        </authorList>
    </citation>
    <scope>NUCLEOTIDE SEQUENCE [LARGE SCALE MRNA] (ISOFORM 1)</scope>
    <source>
        <strain>C57BL/6J</strain>
        <tissue>Amnion</tissue>
    </source>
</reference>
<reference key="4">
    <citation type="submission" date="2005-09" db="EMBL/GenBank/DDBJ databases">
        <authorList>
            <person name="Mural R.J."/>
            <person name="Adams M.D."/>
            <person name="Myers E.W."/>
            <person name="Smith H.O."/>
            <person name="Venter J.C."/>
        </authorList>
    </citation>
    <scope>NUCLEOTIDE SEQUENCE [LARGE SCALE GENOMIC DNA]</scope>
</reference>
<reference key="5">
    <citation type="journal article" date="2004" name="Genome Res.">
        <title>The status, quality, and expansion of the NIH full-length cDNA project: the Mammalian Gene Collection (MGC).</title>
        <authorList>
            <consortium name="The MGC Project Team"/>
        </authorList>
    </citation>
    <scope>NUCLEOTIDE SEQUENCE [LARGE SCALE MRNA] (ISOFORM 1)</scope>
    <source>
        <strain>FVB/N</strain>
        <tissue>Liver</tissue>
    </source>
</reference>
<reference key="6">
    <citation type="journal article" date="1998" name="J. Clin. Invest.">
        <title>Apo B100-containing lipoproteins are secreted by the heart.</title>
        <authorList>
            <person name="Boren J."/>
            <person name="Veniant M.M."/>
            <person name="Young S.G."/>
        </authorList>
    </citation>
    <scope>FUNCTION</scope>
    <scope>TISSUE SPECIFICITY</scope>
</reference>
<reference key="7">
    <citation type="journal article" date="2000" name="J. Biol. Chem.">
        <title>A deficiency of microsomal triglyceride transfer protein reduces apolipoprotein B secretion.</title>
        <authorList>
            <person name="Leung G.K."/>
            <person name="Veniant M.M."/>
            <person name="Kim S.K."/>
            <person name="Zlot C.H."/>
            <person name="Raabe M."/>
            <person name="Bjorkegren J."/>
            <person name="Neese R.A."/>
            <person name="Hellerstein M.K."/>
            <person name="Young S.G."/>
        </authorList>
    </citation>
    <scope>DISRUPTION PHENOTYPE</scope>
    <scope>FUNCTION</scope>
</reference>
<reference key="8">
    <citation type="journal article" date="2000" name="J. Lipid Res.">
        <title>Microsomal triglyceride transfer protein expression during mouse development.</title>
        <authorList>
            <person name="Shelton J.M."/>
            <person name="Lee M.H."/>
            <person name="Richardson J.A."/>
            <person name="Patel S.B."/>
        </authorList>
    </citation>
    <scope>DEVELOPMENTAL STAGE</scope>
</reference>
<reference key="9">
    <citation type="journal article" date="2005" name="J. Lipid Res.">
        <title>Transfer of cholesteryl esters and phospholipids as well as net deposition by microsomal triglyceride transfer protein.</title>
        <authorList>
            <person name="Rava P."/>
            <person name="Athar H."/>
            <person name="Johnson C."/>
            <person name="Hussain M.M."/>
        </authorList>
    </citation>
    <scope>FUNCTION</scope>
    <scope>CATALYTIC ACTIVITY</scope>
</reference>
<reference key="10">
    <citation type="journal article" date="2006" name="J. Biol. Chem.">
        <title>Phospholipid transfer activity of microsomal triacylglycerol transfer protein is sufficient for the assembly and secretion of apolipoprotein B lipoproteins.</title>
        <authorList>
            <person name="Rava P."/>
            <person name="Ojakian G.K."/>
            <person name="Shelness G.S."/>
            <person name="Hussain M.M."/>
        </authorList>
    </citation>
    <scope>FUNCTION</scope>
    <scope>CATALYTIC ACTIVITY</scope>
</reference>
<reference key="11">
    <citation type="journal article" date="2007" name="J. Biol. Chem.">
        <title>Identification of a novel isoform of microsomal triglyceride transfer protein.</title>
        <authorList>
            <person name="Mohler P.J."/>
            <person name="Zhu M.Y."/>
            <person name="Blade A.M."/>
            <person name="Ham A.J."/>
            <person name="Shelness G.S."/>
            <person name="Swift L.L."/>
        </authorList>
    </citation>
    <scope>ALTERNATIVE PROMOTER USAGE</scope>
    <scope>FUNCTION (ISOFORMS 1 AND 2)</scope>
    <scope>SUBCELLULAR LOCATION (ISOFORMS 1 AND 2)</scope>
    <scope>TISSUE SPECIFICITY (ISOFORMS 1 AND 2)</scope>
    <scope>INTERACTION WITH P4HB (ISOFORMS 1 AND 2)</scope>
</reference>
<reference key="12">
    <citation type="journal article" date="2008" name="J. Biol. Chem.">
        <title>Microsomal triglyceride transfer protein enhances cellular cholesteryl esterification by relieving product inhibition.</title>
        <authorList>
            <person name="Iqbal J."/>
            <person name="Rudel L.L."/>
            <person name="Hussain M.M."/>
        </authorList>
    </citation>
    <scope>DISRUPTION PHENOTYPE</scope>
    <scope>FUNCTION</scope>
    <scope>CATALYTIC ACTIVITY</scope>
</reference>
<reference key="13">
    <citation type="journal article" date="2008" name="J. Clin. Invest.">
        <title>FoxO1 mediates insulin-dependent regulation of hepatic VLDL production in mice.</title>
        <authorList>
            <person name="Kamagate A."/>
            <person name="Qu S."/>
            <person name="Perdomo G."/>
            <person name="Su D."/>
            <person name="Kim D.H."/>
            <person name="Slusher S."/>
            <person name="Meseck M."/>
            <person name="Dong H.H."/>
        </authorList>
    </citation>
    <scope>INDUCTION BY FOXO1</scope>
</reference>
<reference key="14">
    <citation type="journal article" date="2010" name="Cell">
        <title>A tissue-specific atlas of mouse protein phosphorylation and expression.</title>
        <authorList>
            <person name="Huttlin E.L."/>
            <person name="Jedrychowski M.P."/>
            <person name="Elias J.E."/>
            <person name="Goswami T."/>
            <person name="Rad R."/>
            <person name="Beausoleil S.A."/>
            <person name="Villen J."/>
            <person name="Haas W."/>
            <person name="Sowa M.E."/>
            <person name="Gygi S.P."/>
        </authorList>
    </citation>
    <scope>IDENTIFICATION BY MASS SPECTROMETRY [LARGE SCALE ANALYSIS]</scope>
    <source>
        <tissue>Kidney</tissue>
        <tissue>Liver</tissue>
        <tissue>Testis</tissue>
    </source>
</reference>
<reference key="15">
    <citation type="journal article" date="2014" name="J. Mol. Endocrinol.">
        <title>LGR4 acts as a link between the peripheral circadian clock and lipid metabolism in liver.</title>
        <authorList>
            <person name="Wang F."/>
            <person name="Zhang X."/>
            <person name="Wang J."/>
            <person name="Chen M."/>
            <person name="Fan N."/>
            <person name="Ma Q."/>
            <person name="Liu R."/>
            <person name="Wang R."/>
            <person name="Li X."/>
            <person name="Liu M."/>
            <person name="Ning G."/>
        </authorList>
    </citation>
    <scope>INDUCTION</scope>
</reference>
<reference key="16">
    <citation type="journal article" date="2020" name="J. Biol. Chem.">
        <title>PRAP1 is a novel lipid-binding protein that promotes lipid absorption by facilitating MTTP-mediated lipid transport.</title>
        <authorList>
            <person name="Peng H."/>
            <person name="Chiu T.Y."/>
            <person name="Liang Y.J."/>
            <person name="Lee C.J."/>
            <person name="Liu C.S."/>
            <person name="Suen C.S."/>
            <person name="Yen J.J."/>
            <person name="Chen H.T."/>
            <person name="Hwang M.J."/>
            <person name="Hussain M.M."/>
            <person name="Yang H.C."/>
            <person name="Yang-Yen H.F."/>
        </authorList>
    </citation>
    <scope>FUNCTION</scope>
    <scope>CATALYTIC ACTIVITY</scope>
    <scope>SUBCELLULAR LOCATION</scope>
    <scope>INTERACTION WITH PRAP1</scope>
</reference>
<accession>O08601</accession>
<accession>B2CXA7</accession>
<accession>Q3UJA0</accession>
<accession>Q91X33</accession>
<gene>
    <name type="primary">Mttp</name>
    <name type="synonym">Mtp</name>
</gene>
<evidence type="ECO:0000250" key="1">
    <source>
        <dbReference type="UniProtKB" id="P55157"/>
    </source>
</evidence>
<evidence type="ECO:0000255" key="2">
    <source>
        <dbReference type="PROSITE-ProRule" id="PRU00557"/>
    </source>
</evidence>
<evidence type="ECO:0000269" key="3">
    <source>
    </source>
</evidence>
<evidence type="ECO:0000269" key="4">
    <source>
    </source>
</evidence>
<evidence type="ECO:0000269" key="5">
    <source>
    </source>
</evidence>
<evidence type="ECO:0000269" key="6">
    <source>
    </source>
</evidence>
<evidence type="ECO:0000269" key="7">
    <source>
    </source>
</evidence>
<evidence type="ECO:0000269" key="8">
    <source>
    </source>
</evidence>
<evidence type="ECO:0000269" key="9">
    <source>
    </source>
</evidence>
<evidence type="ECO:0000269" key="10">
    <source>
    </source>
</evidence>
<evidence type="ECO:0000269" key="11">
    <source>
    </source>
</evidence>
<evidence type="ECO:0000269" key="12">
    <source>
    </source>
</evidence>
<evidence type="ECO:0000269" key="13">
    <source>
    </source>
</evidence>
<evidence type="ECO:0000269" key="14">
    <source>
    </source>
</evidence>
<evidence type="ECO:0000303" key="15">
    <source>
    </source>
</evidence>
<evidence type="ECO:0000305" key="16"/>
<evidence type="ECO:0000305" key="17">
    <source>
    </source>
</evidence>
<evidence type="ECO:0000305" key="18">
    <source>
    </source>
</evidence>
<name>MTP_MOUSE</name>
<feature type="signal peptide">
    <location>
        <begin position="1"/>
        <end position="21"/>
    </location>
</feature>
<feature type="chain" id="PRO_0000041595" description="Microsomal triglyceride transfer protein large subunit">
    <location>
        <begin position="22"/>
        <end position="894"/>
    </location>
</feature>
<feature type="domain" description="Vitellogenin" evidence="2">
    <location>
        <begin position="28"/>
        <end position="658"/>
    </location>
</feature>
<feature type="disulfide bond" evidence="2">
    <location>
        <begin position="174"/>
        <end position="194"/>
    </location>
</feature>
<feature type="splice variant" id="VSP_038546" description="In isoform 2." evidence="15">
    <original>MILLAVLFLCFFSSYSASVK</original>
    <variation>MTVVMGKCQVSDGRQLLLFYAVLLLFPTLCAMQNS</variation>
    <location>
        <begin position="1"/>
        <end position="20"/>
    </location>
</feature>
<feature type="sequence conflict" description="In Ref. 1; AAB51431 and 2; ACB41497." evidence="16" ref="1 2">
    <original>GKA</original>
    <variation>KGT</variation>
    <location>
        <begin position="654"/>
        <end position="656"/>
    </location>
</feature>
<feature type="sequence conflict" description="In Ref. 1; AAB51431, 2; ACB41497, 4; AAH12686 and 5; EDL12110." evidence="16" ref="1 2 4 5">
    <original>V</original>
    <variation>L</variation>
    <location>
        <position position="800"/>
    </location>
</feature>
<feature type="sequence conflict" description="In Ref. 1; AAB51431 and 2; ACB41497." evidence="16" ref="1 2">
    <original>E</original>
    <variation>Q</variation>
    <location>
        <position position="872"/>
    </location>
</feature>
<comment type="function">
    <text evidence="3 5 6 8 10 12 14">Catalyzes the transport of triglyceride, cholesteryl ester, and phospholipid between phospholipid surfaces (PubMed:15897609, PubMed:16478722, PubMed:18502767, PubMed:33168624). Required for the assembly and secretion of plasma lipoproteins that contain apolipoprotein B (PubMed:10713055, PubMed:17635917, PubMed:18502767, PubMed:33168624, PubMed:9502759). May be involved in regulating cholesteryl ester biosynthesis in cells that produce lipoproteins (PubMed:18502767).</text>
</comment>
<comment type="function">
    <molecule>Isoform 2</molecule>
    <text evidence="7 8">Critical for the development of natural killer T (NKT) cells (PubMed:17312007). Required for the assembly and secretion of plasma lipoproteins that contain apolipoprotein B (PubMed:17635917).</text>
</comment>
<comment type="catalytic activity">
    <reaction evidence="1">
        <text>a 1,2-diacyl-sn-glycero-3-phosphocholine(in) = a 1,2-diacyl-sn-glycero-3-phosphocholine(out)</text>
        <dbReference type="Rhea" id="RHEA:38571"/>
        <dbReference type="ChEBI" id="CHEBI:57643"/>
    </reaction>
    <physiologicalReaction direction="left-to-right" evidence="1">
        <dbReference type="Rhea" id="RHEA:38572"/>
    </physiologicalReaction>
</comment>
<comment type="catalytic activity">
    <reaction evidence="5">
        <text>a 1,2-diacyl-sn-glycero-3-phosphoethanolamine(in) = a 1,2-diacyl-sn-glycero-3-phosphoethanolamine(out)</text>
        <dbReference type="Rhea" id="RHEA:38895"/>
        <dbReference type="ChEBI" id="CHEBI:64612"/>
    </reaction>
    <physiologicalReaction direction="left-to-right" evidence="17">
        <dbReference type="Rhea" id="RHEA:38896"/>
    </physiologicalReaction>
</comment>
<comment type="catalytic activity">
    <reaction evidence="5 10">
        <text>a cholesterol ester(in) = a cholesterol ester(out)</text>
        <dbReference type="Rhea" id="RHEA:39007"/>
        <dbReference type="ChEBI" id="CHEBI:17002"/>
    </reaction>
    <physiologicalReaction direction="left-to-right" evidence="17">
        <dbReference type="Rhea" id="RHEA:39008"/>
    </physiologicalReaction>
</comment>
<comment type="catalytic activity">
    <reaction evidence="5 6 10 12">
        <text>a triacyl-sn-glycerol(in) = a triacyl-sn-glycerol(out)</text>
        <dbReference type="Rhea" id="RHEA:39011"/>
        <dbReference type="ChEBI" id="CHEBI:64615"/>
    </reaction>
    <physiologicalReaction direction="left-to-right" evidence="18">
        <dbReference type="Rhea" id="RHEA:39012"/>
    </physiologicalReaction>
</comment>
<comment type="subunit">
    <text evidence="12">Interacts with PRAP1.</text>
</comment>
<comment type="subunit">
    <molecule>Isoform 1</molecule>
    <text evidence="1 8">Heterodimer; heterodimerizes with the protein disulfide isomerase (P4HB/PDI) (PubMed:17635917). Interacts with APOB (By similarity).</text>
</comment>
<comment type="subunit">
    <molecule>Isoform 2</molecule>
    <text evidence="8">Heterodimer; heterodimerizes with the protein disulfide isomerase (P4HB/PDI) (PubMed:17635917).</text>
</comment>
<comment type="subcellular location">
    <subcellularLocation>
        <location evidence="12">Endoplasmic reticulum</location>
    </subcellularLocation>
</comment>
<comment type="subcellular location">
    <molecule>Isoform 1</molecule>
    <subcellularLocation>
        <location evidence="7 8">Endoplasmic reticulum</location>
    </subcellularLocation>
    <subcellularLocation>
        <location evidence="1">Golgi apparatus</location>
    </subcellularLocation>
    <text evidence="1">Colocalizes with P4HB/PDI in the endoplasmic reticulum (By similarity).</text>
</comment>
<comment type="subcellular location">
    <molecule>Isoform 2</molecule>
    <subcellularLocation>
        <location evidence="7">Endoplasmic reticulum</location>
    </subcellularLocation>
    <subcellularLocation>
        <location evidence="8">Golgi apparatus</location>
    </subcellularLocation>
</comment>
<comment type="alternative products">
    <event type="alternative promoter"/>
    <isoform>
        <id>O08601-1</id>
        <name>1</name>
        <name>MTP-A</name>
        <sequence type="displayed"/>
    </isoform>
    <isoform>
        <id>O08601-2</id>
        <name>2</name>
        <name>MTPv1</name>
        <name>MTP-B</name>
        <sequence type="described" ref="VSP_038546"/>
    </isoform>
</comment>
<comment type="tissue specificity">
    <molecule>Isoform 1</molecule>
    <text evidence="8 13 14">Mainly expressed in the intestine and the liver, and at lower levels in white and brown fat cells (PubMed:17635917, PubMed:8660984). Expressed in heart (PubMed:9502759).</text>
</comment>
<comment type="tissue specificity">
    <molecule>Isoform 2</molecule>
    <text evidence="7 8">Ubiquitous, and is the major isoform in hematopoietic cells and adipocytes.</text>
</comment>
<comment type="developmental stage">
    <text evidence="4">Expression in the yolk sac tissues followed by expression in the primordial liver cell nests as early as day 9 post-coitum (9.5 dpc). Intestinal expression is detected around 12.5 dpc and attains full adult expression patterns by 14.5 dpc.</text>
</comment>
<comment type="induction">
    <text evidence="9 11">Up-regulated by FOXO1. Expressed in a circadian manner in the liver.</text>
</comment>
<comment type="PTM">
    <molecule>Isoform 2</molecule>
    <text evidence="7 8">Cleaved by signal peptidase between residues Gln-33 and Asn-34.</text>
</comment>
<comment type="disruption phenotype">
    <text evidence="3 10">Lowers plasma and tissue triglyceride levels, and increases cellular free cholesterol.</text>
</comment>